<reference key="1">
    <citation type="submission" date="2008-09" db="EMBL/GenBank/DDBJ databases">
        <title>Expressed genes in Physcomitrella patens.</title>
        <authorList>
            <person name="Hasebe M."/>
            <person name="Nishiyama T."/>
            <person name="Suzuki Y."/>
            <person name="Sugano S."/>
            <person name="Hiwatashi Y."/>
            <person name="Kohara Y."/>
            <person name="Shin-i T."/>
        </authorList>
    </citation>
    <scope>NUCLEOTIDE SEQUENCE [LARGE SCALE MRNA]</scope>
    <source>
        <strain>cv. Gransden 2004</strain>
    </source>
</reference>
<reference key="2">
    <citation type="journal article" date="2008" name="Science">
        <title>The Physcomitrella genome reveals evolutionary insights into the conquest of land by plants.</title>
        <authorList>
            <person name="Rensing S.A."/>
            <person name="Lang D."/>
            <person name="Zimmer A.D."/>
            <person name="Terry A."/>
            <person name="Salamov A."/>
            <person name="Shapiro H."/>
            <person name="Nishiyama T."/>
            <person name="Perroud P.-F."/>
            <person name="Lindquist E.A."/>
            <person name="Kamisugi Y."/>
            <person name="Tanahashi T."/>
            <person name="Sakakibara K."/>
            <person name="Fujita T."/>
            <person name="Oishi K."/>
            <person name="Shin-I T."/>
            <person name="Kuroki Y."/>
            <person name="Toyoda A."/>
            <person name="Suzuki Y."/>
            <person name="Hashimoto S.-I."/>
            <person name="Yamaguchi K."/>
            <person name="Sugano S."/>
            <person name="Kohara Y."/>
            <person name="Fujiyama A."/>
            <person name="Anterola A."/>
            <person name="Aoki S."/>
            <person name="Ashton N."/>
            <person name="Barbazuk W.B."/>
            <person name="Barker E."/>
            <person name="Bennetzen J.L."/>
            <person name="Blankenship R."/>
            <person name="Cho S.H."/>
            <person name="Dutcher S.K."/>
            <person name="Estelle M."/>
            <person name="Fawcett J.A."/>
            <person name="Gundlach H."/>
            <person name="Hanada K."/>
            <person name="Heyl A."/>
            <person name="Hicks K.A."/>
            <person name="Hughes J."/>
            <person name="Lohr M."/>
            <person name="Mayer K."/>
            <person name="Melkozernov A."/>
            <person name="Murata T."/>
            <person name="Nelson D.R."/>
            <person name="Pils B."/>
            <person name="Prigge M."/>
            <person name="Reiss B."/>
            <person name="Renner T."/>
            <person name="Rombauts S."/>
            <person name="Rushton P.J."/>
            <person name="Sanderfoot A."/>
            <person name="Schween G."/>
            <person name="Shiu S.-H."/>
            <person name="Stueber K."/>
            <person name="Theodoulou F.L."/>
            <person name="Tu H."/>
            <person name="Van de Peer Y."/>
            <person name="Verrier P.J."/>
            <person name="Waters E."/>
            <person name="Wood A."/>
            <person name="Yang L."/>
            <person name="Cove D."/>
            <person name="Cuming A.C."/>
            <person name="Hasebe M."/>
            <person name="Lucas S."/>
            <person name="Mishler B.D."/>
            <person name="Reski R."/>
            <person name="Grigoriev I.V."/>
            <person name="Quatrano R.S."/>
            <person name="Boore J.L."/>
        </authorList>
    </citation>
    <scope>NUCLEOTIDE SEQUENCE [LARGE SCALE GENOMIC DNA]</scope>
    <source>
        <strain>cv. Gransden 2004</strain>
    </source>
</reference>
<reference key="3">
    <citation type="journal article" date="2014" name="Plant Physiol.">
        <title>Functional and evolutionary analysis of the CASPARIAN STRIP MEMBRANE DOMAIN PROTEIN family.</title>
        <authorList>
            <person name="Roppolo D."/>
            <person name="Boeckmann B."/>
            <person name="Pfister A."/>
            <person name="Boutet E."/>
            <person name="Rubio M.C."/>
            <person name="Denervaud-Tendon V."/>
            <person name="Vermeer J.E."/>
            <person name="Gheyselinck J."/>
            <person name="Xenarios I."/>
            <person name="Geldner N."/>
        </authorList>
    </citation>
    <scope>GENE FAMILY</scope>
    <scope>NOMENCLATURE</scope>
</reference>
<accession>A9SEY7</accession>
<proteinExistence type="evidence at transcript level"/>
<evidence type="ECO:0000250" key="1"/>
<evidence type="ECO:0000255" key="2"/>
<evidence type="ECO:0000305" key="3"/>
<name>CSPL2_PHYPA</name>
<sequence>MNGATVQPSYKEAGPVRYHPMHDCLSLILRLLTLGATIAAIVAMLKSTQTVPTLLGPHTARWKDFPAFEWFVIGNSIVLVYAALGTLAACLSLFTRRGPLSYTKTAWLTFLCDFICSCALISAGSTALGVAWIGKHGQHSAFWNAVCPTVDRFCDYVQGALIATLCGFIFQALSTVIAASALHNLATHRH</sequence>
<protein>
    <recommendedName>
        <fullName>CASP-like protein 1U3</fullName>
        <shortName>PpCASPL1U3</shortName>
    </recommendedName>
</protein>
<comment type="subunit">
    <text evidence="1">Homodimer and heterodimers.</text>
</comment>
<comment type="subcellular location">
    <subcellularLocation>
        <location evidence="1">Cell membrane</location>
        <topology evidence="1">Multi-pass membrane protein</topology>
    </subcellularLocation>
</comment>
<comment type="similarity">
    <text evidence="3">Belongs to the Casparian strip membrane proteins (CASP) family.</text>
</comment>
<gene>
    <name type="ORF">PHYPADRAFT_232936</name>
</gene>
<organism>
    <name type="scientific">Physcomitrium patens</name>
    <name type="common">Spreading-leaved earth moss</name>
    <name type="synonym">Physcomitrella patens</name>
    <dbReference type="NCBI Taxonomy" id="3218"/>
    <lineage>
        <taxon>Eukaryota</taxon>
        <taxon>Viridiplantae</taxon>
        <taxon>Streptophyta</taxon>
        <taxon>Embryophyta</taxon>
        <taxon>Bryophyta</taxon>
        <taxon>Bryophytina</taxon>
        <taxon>Bryopsida</taxon>
        <taxon>Funariidae</taxon>
        <taxon>Funariales</taxon>
        <taxon>Funariaceae</taxon>
        <taxon>Physcomitrium</taxon>
    </lineage>
</organism>
<dbReference type="EMBL" id="DC927297">
    <property type="status" value="NOT_ANNOTATED_CDS"/>
    <property type="molecule type" value="mRNA"/>
</dbReference>
<dbReference type="EMBL" id="DS544960">
    <property type="protein sequence ID" value="EDQ70366.1"/>
    <property type="molecule type" value="Genomic_DNA"/>
</dbReference>
<dbReference type="RefSeq" id="XP_001764924.1">
    <property type="nucleotide sequence ID" value="XM_001764872.1"/>
</dbReference>
<dbReference type="SMR" id="A9SEY7"/>
<dbReference type="FunCoup" id="A9SEY7">
    <property type="interactions" value="255"/>
</dbReference>
<dbReference type="PaxDb" id="3218-PP1S71_359V6.1"/>
<dbReference type="EnsemblPlants" id="Pp3c22_13920V3.1">
    <property type="protein sequence ID" value="Pp3c22_13920V3.1"/>
    <property type="gene ID" value="Pp3c22_13920"/>
</dbReference>
<dbReference type="EnsemblPlants" id="Pp3c22_13920V3.2">
    <property type="protein sequence ID" value="Pp3c22_13920V3.2"/>
    <property type="gene ID" value="Pp3c22_13920"/>
</dbReference>
<dbReference type="Gramene" id="Pp3c22_13920V3.1">
    <property type="protein sequence ID" value="Pp3c22_13920V3.1"/>
    <property type="gene ID" value="Pp3c22_13920"/>
</dbReference>
<dbReference type="Gramene" id="Pp3c22_13920V3.2">
    <property type="protein sequence ID" value="Pp3c22_13920V3.2"/>
    <property type="gene ID" value="Pp3c22_13920"/>
</dbReference>
<dbReference type="eggNOG" id="ENOG502RZ8P">
    <property type="taxonomic scope" value="Eukaryota"/>
</dbReference>
<dbReference type="HOGENOM" id="CLU_066104_3_0_1"/>
<dbReference type="InParanoid" id="A9SEY7"/>
<dbReference type="OMA" id="WHEICHH"/>
<dbReference type="OrthoDB" id="1906221at2759"/>
<dbReference type="Proteomes" id="UP000006727">
    <property type="component" value="Chromosome 22"/>
</dbReference>
<dbReference type="GO" id="GO:0005886">
    <property type="term" value="C:plasma membrane"/>
    <property type="evidence" value="ECO:0007669"/>
    <property type="project" value="UniProtKB-SubCell"/>
</dbReference>
<dbReference type="InterPro" id="IPR006459">
    <property type="entry name" value="CASP/CASPL"/>
</dbReference>
<dbReference type="InterPro" id="IPR006702">
    <property type="entry name" value="CASP_dom"/>
</dbReference>
<dbReference type="InterPro" id="IPR044173">
    <property type="entry name" value="CASPL"/>
</dbReference>
<dbReference type="NCBIfam" id="TIGR01569">
    <property type="entry name" value="A_tha_TIGR01569"/>
    <property type="match status" value="1"/>
</dbReference>
<dbReference type="PANTHER" id="PTHR36488">
    <property type="entry name" value="CASP-LIKE PROTEIN 1U1"/>
    <property type="match status" value="1"/>
</dbReference>
<dbReference type="PANTHER" id="PTHR36488:SF8">
    <property type="entry name" value="CASP-LIKE PROTEIN 1U1"/>
    <property type="match status" value="1"/>
</dbReference>
<dbReference type="Pfam" id="PF04535">
    <property type="entry name" value="CASP_dom"/>
    <property type="match status" value="1"/>
</dbReference>
<keyword id="KW-1003">Cell membrane</keyword>
<keyword id="KW-0472">Membrane</keyword>
<keyword id="KW-1185">Reference proteome</keyword>
<keyword id="KW-0812">Transmembrane</keyword>
<keyword id="KW-1133">Transmembrane helix</keyword>
<feature type="chain" id="PRO_0000370725" description="CASP-like protein 1U3">
    <location>
        <begin position="1"/>
        <end position="190"/>
    </location>
</feature>
<feature type="topological domain" description="Cytoplasmic" evidence="2">
    <location>
        <begin position="1"/>
        <end position="24"/>
    </location>
</feature>
<feature type="transmembrane region" description="Helical" evidence="2">
    <location>
        <begin position="25"/>
        <end position="45"/>
    </location>
</feature>
<feature type="topological domain" description="Extracellular" evidence="2">
    <location>
        <begin position="46"/>
        <end position="70"/>
    </location>
</feature>
<feature type="transmembrane region" description="Helical" evidence="2">
    <location>
        <begin position="71"/>
        <end position="91"/>
    </location>
</feature>
<feature type="topological domain" description="Cytoplasmic" evidence="2">
    <location>
        <begin position="92"/>
        <end position="113"/>
    </location>
</feature>
<feature type="transmembrane region" description="Helical" evidence="2">
    <location>
        <begin position="114"/>
        <end position="134"/>
    </location>
</feature>
<feature type="topological domain" description="Extracellular" evidence="2">
    <location>
        <begin position="135"/>
        <end position="158"/>
    </location>
</feature>
<feature type="transmembrane region" description="Helical" evidence="2">
    <location>
        <begin position="159"/>
        <end position="179"/>
    </location>
</feature>
<feature type="topological domain" description="Cytoplasmic" evidence="2">
    <location>
        <begin position="180"/>
        <end position="190"/>
    </location>
</feature>